<reference key="1">
    <citation type="journal article" date="2011" name="J. Bacteriol.">
        <title>Complete genome sequence of the Thermophilic Bacterium Exiguobacterium sp. AT1b.</title>
        <authorList>
            <person name="Vishnivetskaya T.A."/>
            <person name="Lucas S."/>
            <person name="Copeland A."/>
            <person name="Lapidus A."/>
            <person name="Glavina del Rio T."/>
            <person name="Dalin E."/>
            <person name="Tice H."/>
            <person name="Bruce D.C."/>
            <person name="Goodwin L.A."/>
            <person name="Pitluck S."/>
            <person name="Saunders E."/>
            <person name="Brettin T."/>
            <person name="Detter C."/>
            <person name="Han C."/>
            <person name="Larimer F."/>
            <person name="Land M.L."/>
            <person name="Hauser L.J."/>
            <person name="Kyrpides N.C."/>
            <person name="Ovchinnikova G."/>
            <person name="Kathariou S."/>
            <person name="Ramaley R.F."/>
            <person name="Rodrigues D.F."/>
            <person name="Hendrix C."/>
            <person name="Richardson P."/>
            <person name="Tiedje J.M."/>
        </authorList>
    </citation>
    <scope>NUCLEOTIDE SEQUENCE [LARGE SCALE GENOMIC DNA]</scope>
    <source>
        <strain>ATCC BAA-1283 / AT1b</strain>
    </source>
</reference>
<organism>
    <name type="scientific">Exiguobacterium sp. (strain ATCC BAA-1283 / AT1b)</name>
    <dbReference type="NCBI Taxonomy" id="360911"/>
    <lineage>
        <taxon>Bacteria</taxon>
        <taxon>Bacillati</taxon>
        <taxon>Bacillota</taxon>
        <taxon>Bacilli</taxon>
        <taxon>Bacillales</taxon>
        <taxon>Bacillales Family XII. Incertae Sedis</taxon>
        <taxon>Exiguobacterium</taxon>
    </lineage>
</organism>
<name>ATPA_EXISA</name>
<protein>
    <recommendedName>
        <fullName evidence="1">ATP synthase subunit alpha</fullName>
        <ecNumber evidence="1">7.1.2.2</ecNumber>
    </recommendedName>
    <alternativeName>
        <fullName evidence="1">ATP synthase F1 sector subunit alpha</fullName>
    </alternativeName>
    <alternativeName>
        <fullName evidence="1">F-ATPase subunit alpha</fullName>
    </alternativeName>
</protein>
<comment type="function">
    <text evidence="1">Produces ATP from ADP in the presence of a proton gradient across the membrane. The alpha chain is a regulatory subunit.</text>
</comment>
<comment type="catalytic activity">
    <reaction evidence="1">
        <text>ATP + H2O + 4 H(+)(in) = ADP + phosphate + 5 H(+)(out)</text>
        <dbReference type="Rhea" id="RHEA:57720"/>
        <dbReference type="ChEBI" id="CHEBI:15377"/>
        <dbReference type="ChEBI" id="CHEBI:15378"/>
        <dbReference type="ChEBI" id="CHEBI:30616"/>
        <dbReference type="ChEBI" id="CHEBI:43474"/>
        <dbReference type="ChEBI" id="CHEBI:456216"/>
        <dbReference type="EC" id="7.1.2.2"/>
    </reaction>
</comment>
<comment type="subunit">
    <text evidence="1">F-type ATPases have 2 components, CF(1) - the catalytic core - and CF(0) - the membrane proton channel. CF(1) has five subunits: alpha(3), beta(3), gamma(1), delta(1), epsilon(1). CF(0) has three main subunits: a(1), b(2) and c(9-12). The alpha and beta chains form an alternating ring which encloses part of the gamma chain. CF(1) is attached to CF(0) by a central stalk formed by the gamma and epsilon chains, while a peripheral stalk is formed by the delta and b chains.</text>
</comment>
<comment type="subcellular location">
    <subcellularLocation>
        <location evidence="1">Cell membrane</location>
        <topology evidence="1">Peripheral membrane protein</topology>
    </subcellularLocation>
</comment>
<comment type="similarity">
    <text evidence="1">Belongs to the ATPase alpha/beta chains family.</text>
</comment>
<dbReference type="EC" id="7.1.2.2" evidence="1"/>
<dbReference type="EMBL" id="CP001615">
    <property type="protein sequence ID" value="ACQ70238.1"/>
    <property type="molecule type" value="Genomic_DNA"/>
</dbReference>
<dbReference type="RefSeq" id="WP_012727357.1">
    <property type="nucleotide sequence ID" value="NC_012673.1"/>
</dbReference>
<dbReference type="SMR" id="C4KYS5"/>
<dbReference type="STRING" id="360911.EAT1b_1311"/>
<dbReference type="KEGG" id="eat:EAT1b_1311"/>
<dbReference type="eggNOG" id="COG0056">
    <property type="taxonomic scope" value="Bacteria"/>
</dbReference>
<dbReference type="HOGENOM" id="CLU_010091_2_1_9"/>
<dbReference type="OrthoDB" id="9803053at2"/>
<dbReference type="Proteomes" id="UP000000716">
    <property type="component" value="Chromosome"/>
</dbReference>
<dbReference type="GO" id="GO:0005886">
    <property type="term" value="C:plasma membrane"/>
    <property type="evidence" value="ECO:0007669"/>
    <property type="project" value="UniProtKB-SubCell"/>
</dbReference>
<dbReference type="GO" id="GO:0045259">
    <property type="term" value="C:proton-transporting ATP synthase complex"/>
    <property type="evidence" value="ECO:0007669"/>
    <property type="project" value="UniProtKB-KW"/>
</dbReference>
<dbReference type="GO" id="GO:0043531">
    <property type="term" value="F:ADP binding"/>
    <property type="evidence" value="ECO:0007669"/>
    <property type="project" value="TreeGrafter"/>
</dbReference>
<dbReference type="GO" id="GO:0005524">
    <property type="term" value="F:ATP binding"/>
    <property type="evidence" value="ECO:0007669"/>
    <property type="project" value="UniProtKB-UniRule"/>
</dbReference>
<dbReference type="GO" id="GO:0046933">
    <property type="term" value="F:proton-transporting ATP synthase activity, rotational mechanism"/>
    <property type="evidence" value="ECO:0007669"/>
    <property type="project" value="UniProtKB-UniRule"/>
</dbReference>
<dbReference type="CDD" id="cd18113">
    <property type="entry name" value="ATP-synt_F1_alpha_C"/>
    <property type="match status" value="1"/>
</dbReference>
<dbReference type="CDD" id="cd18116">
    <property type="entry name" value="ATP-synt_F1_alpha_N"/>
    <property type="match status" value="1"/>
</dbReference>
<dbReference type="CDD" id="cd01132">
    <property type="entry name" value="F1-ATPase_alpha_CD"/>
    <property type="match status" value="1"/>
</dbReference>
<dbReference type="FunFam" id="1.20.150.20:FF:000001">
    <property type="entry name" value="ATP synthase subunit alpha"/>
    <property type="match status" value="1"/>
</dbReference>
<dbReference type="FunFam" id="2.40.30.20:FF:000001">
    <property type="entry name" value="ATP synthase subunit alpha"/>
    <property type="match status" value="1"/>
</dbReference>
<dbReference type="FunFam" id="3.40.50.300:FF:000002">
    <property type="entry name" value="ATP synthase subunit alpha"/>
    <property type="match status" value="1"/>
</dbReference>
<dbReference type="Gene3D" id="2.40.30.20">
    <property type="match status" value="1"/>
</dbReference>
<dbReference type="Gene3D" id="1.20.150.20">
    <property type="entry name" value="ATP synthase alpha/beta chain, C-terminal domain"/>
    <property type="match status" value="1"/>
</dbReference>
<dbReference type="Gene3D" id="3.40.50.300">
    <property type="entry name" value="P-loop containing nucleotide triphosphate hydrolases"/>
    <property type="match status" value="1"/>
</dbReference>
<dbReference type="HAMAP" id="MF_01346">
    <property type="entry name" value="ATP_synth_alpha_bact"/>
    <property type="match status" value="1"/>
</dbReference>
<dbReference type="InterPro" id="IPR023366">
    <property type="entry name" value="ATP_synth_asu-like_sf"/>
</dbReference>
<dbReference type="InterPro" id="IPR000793">
    <property type="entry name" value="ATP_synth_asu_C"/>
</dbReference>
<dbReference type="InterPro" id="IPR038376">
    <property type="entry name" value="ATP_synth_asu_C_sf"/>
</dbReference>
<dbReference type="InterPro" id="IPR033732">
    <property type="entry name" value="ATP_synth_F1_a_nt-bd_dom"/>
</dbReference>
<dbReference type="InterPro" id="IPR005294">
    <property type="entry name" value="ATP_synth_F1_asu"/>
</dbReference>
<dbReference type="InterPro" id="IPR020003">
    <property type="entry name" value="ATPase_a/bsu_AS"/>
</dbReference>
<dbReference type="InterPro" id="IPR004100">
    <property type="entry name" value="ATPase_F1/V1/A1_a/bsu_N"/>
</dbReference>
<dbReference type="InterPro" id="IPR036121">
    <property type="entry name" value="ATPase_F1/V1/A1_a/bsu_N_sf"/>
</dbReference>
<dbReference type="InterPro" id="IPR000194">
    <property type="entry name" value="ATPase_F1/V1/A1_a/bsu_nucl-bd"/>
</dbReference>
<dbReference type="InterPro" id="IPR027417">
    <property type="entry name" value="P-loop_NTPase"/>
</dbReference>
<dbReference type="NCBIfam" id="TIGR00962">
    <property type="entry name" value="atpA"/>
    <property type="match status" value="1"/>
</dbReference>
<dbReference type="NCBIfam" id="NF009884">
    <property type="entry name" value="PRK13343.1"/>
    <property type="match status" value="1"/>
</dbReference>
<dbReference type="PANTHER" id="PTHR48082">
    <property type="entry name" value="ATP SYNTHASE SUBUNIT ALPHA, MITOCHONDRIAL"/>
    <property type="match status" value="1"/>
</dbReference>
<dbReference type="PANTHER" id="PTHR48082:SF2">
    <property type="entry name" value="ATP SYNTHASE SUBUNIT ALPHA, MITOCHONDRIAL"/>
    <property type="match status" value="1"/>
</dbReference>
<dbReference type="Pfam" id="PF00006">
    <property type="entry name" value="ATP-synt_ab"/>
    <property type="match status" value="1"/>
</dbReference>
<dbReference type="Pfam" id="PF00306">
    <property type="entry name" value="ATP-synt_ab_C"/>
    <property type="match status" value="1"/>
</dbReference>
<dbReference type="Pfam" id="PF02874">
    <property type="entry name" value="ATP-synt_ab_N"/>
    <property type="match status" value="1"/>
</dbReference>
<dbReference type="PIRSF" id="PIRSF039088">
    <property type="entry name" value="F_ATPase_subunit_alpha"/>
    <property type="match status" value="1"/>
</dbReference>
<dbReference type="SUPFAM" id="SSF47917">
    <property type="entry name" value="C-terminal domain of alpha and beta subunits of F1 ATP synthase"/>
    <property type="match status" value="1"/>
</dbReference>
<dbReference type="SUPFAM" id="SSF50615">
    <property type="entry name" value="N-terminal domain of alpha and beta subunits of F1 ATP synthase"/>
    <property type="match status" value="1"/>
</dbReference>
<dbReference type="SUPFAM" id="SSF52540">
    <property type="entry name" value="P-loop containing nucleoside triphosphate hydrolases"/>
    <property type="match status" value="1"/>
</dbReference>
<dbReference type="PROSITE" id="PS00152">
    <property type="entry name" value="ATPASE_ALPHA_BETA"/>
    <property type="match status" value="1"/>
</dbReference>
<evidence type="ECO:0000255" key="1">
    <source>
        <dbReference type="HAMAP-Rule" id="MF_01346"/>
    </source>
</evidence>
<accession>C4KYS5</accession>
<gene>
    <name evidence="1" type="primary">atpA</name>
    <name type="ordered locus">EAT1b_1311</name>
</gene>
<proteinExistence type="inferred from homology"/>
<sequence length="502" mass="54565">MTIKAEEISALLKERIASYGSEIEVSETGTVIQVGDGIARAHGLDNVMAGELVEFSNGVMGLAQNLEEGNVGIIILGDYKGIKEGDSVKRTGRIMEVPVGEALLGRVVNPLGQPIDGLGPIVTDTYNPIERKAYGVMARKSVHEPLQTGIKAIDALVPIGRGQRELIIGDRQTGKTSVAIDTIINQKEENMICIYVAIGQKESTVRGVVETLRQNGALDYTIVVSASASQPAPLLYLAPFAGVSMGEYFMDRGQHVLVVYDDLSKQAAAYRELSLLLRRPPGREAYPGDVFYLHSRLLERAAKLNDELGGGSLTALPFIETQASDISAYIPTNVISITDGQIFLQSDLFFSGVRPAINAGLSVSRVGGSAQVKAMKKVAGTLRLDLASYRELEAFAQFGSDLDKATQSKLNRGQRTVEVLKQDLNAPLSVDKQVIIIYALTKGHLDDIPVTDIRRFETEMNAWLDQNRKDLCREIRQTGNLPSDEAMVDAITEFKKTFSPSV</sequence>
<keyword id="KW-0066">ATP synthesis</keyword>
<keyword id="KW-0067">ATP-binding</keyword>
<keyword id="KW-1003">Cell membrane</keyword>
<keyword id="KW-0139">CF(1)</keyword>
<keyword id="KW-0375">Hydrogen ion transport</keyword>
<keyword id="KW-0406">Ion transport</keyword>
<keyword id="KW-0472">Membrane</keyword>
<keyword id="KW-0547">Nucleotide-binding</keyword>
<keyword id="KW-1278">Translocase</keyword>
<keyword id="KW-0813">Transport</keyword>
<feature type="chain" id="PRO_1000214809" description="ATP synthase subunit alpha">
    <location>
        <begin position="1"/>
        <end position="502"/>
    </location>
</feature>
<feature type="binding site" evidence="1">
    <location>
        <begin position="169"/>
        <end position="176"/>
    </location>
    <ligand>
        <name>ATP</name>
        <dbReference type="ChEBI" id="CHEBI:30616"/>
    </ligand>
</feature>
<feature type="site" description="Required for activity" evidence="1">
    <location>
        <position position="362"/>
    </location>
</feature>